<evidence type="ECO:0000255" key="1">
    <source>
        <dbReference type="HAMAP-Rule" id="MF_01307"/>
    </source>
</evidence>
<evidence type="ECO:0000305" key="2"/>
<name>RS5_BURVG</name>
<feature type="chain" id="PRO_0000323093" description="Small ribosomal subunit protein uS5">
    <location>
        <begin position="1"/>
        <end position="172"/>
    </location>
</feature>
<feature type="domain" description="S5 DRBM" evidence="1">
    <location>
        <begin position="17"/>
        <end position="80"/>
    </location>
</feature>
<accession>A4JAQ7</accession>
<proteinExistence type="inferred from homology"/>
<keyword id="KW-0687">Ribonucleoprotein</keyword>
<keyword id="KW-0689">Ribosomal protein</keyword>
<keyword id="KW-0694">RNA-binding</keyword>
<keyword id="KW-0699">rRNA-binding</keyword>
<sequence>MAKMQAKVQADERDDGLREKMISVNRVTKVVKGGRILGFAALTVVGDGDGRIGMGKGKAKEVPVAVQKAMEQARRNMFKVPLKNGTLQHEVHGKHGASAVLLAPAKAGTGVIAGGPMRAVFDVMGVQNVVAKSHGSTNPYNLVRATLDGLRKQSTPADIAAKRGKSVEDILG</sequence>
<organism>
    <name type="scientific">Burkholderia vietnamiensis (strain G4 / LMG 22486)</name>
    <name type="common">Burkholderia cepacia (strain R1808)</name>
    <dbReference type="NCBI Taxonomy" id="269482"/>
    <lineage>
        <taxon>Bacteria</taxon>
        <taxon>Pseudomonadati</taxon>
        <taxon>Pseudomonadota</taxon>
        <taxon>Betaproteobacteria</taxon>
        <taxon>Burkholderiales</taxon>
        <taxon>Burkholderiaceae</taxon>
        <taxon>Burkholderia</taxon>
        <taxon>Burkholderia cepacia complex</taxon>
    </lineage>
</organism>
<protein>
    <recommendedName>
        <fullName evidence="1">Small ribosomal subunit protein uS5</fullName>
    </recommendedName>
    <alternativeName>
        <fullName evidence="2">30S ribosomal protein S5</fullName>
    </alternativeName>
</protein>
<dbReference type="EMBL" id="CP000614">
    <property type="protein sequence ID" value="ABO53360.1"/>
    <property type="molecule type" value="Genomic_DNA"/>
</dbReference>
<dbReference type="SMR" id="A4JAQ7"/>
<dbReference type="KEGG" id="bvi:Bcep1808_0347"/>
<dbReference type="eggNOG" id="COG0098">
    <property type="taxonomic scope" value="Bacteria"/>
</dbReference>
<dbReference type="HOGENOM" id="CLU_065898_2_2_4"/>
<dbReference type="Proteomes" id="UP000002287">
    <property type="component" value="Chromosome 1"/>
</dbReference>
<dbReference type="GO" id="GO:0015935">
    <property type="term" value="C:small ribosomal subunit"/>
    <property type="evidence" value="ECO:0007669"/>
    <property type="project" value="InterPro"/>
</dbReference>
<dbReference type="GO" id="GO:0019843">
    <property type="term" value="F:rRNA binding"/>
    <property type="evidence" value="ECO:0007669"/>
    <property type="project" value="UniProtKB-UniRule"/>
</dbReference>
<dbReference type="GO" id="GO:0003735">
    <property type="term" value="F:structural constituent of ribosome"/>
    <property type="evidence" value="ECO:0007669"/>
    <property type="project" value="InterPro"/>
</dbReference>
<dbReference type="GO" id="GO:0006412">
    <property type="term" value="P:translation"/>
    <property type="evidence" value="ECO:0007669"/>
    <property type="project" value="UniProtKB-UniRule"/>
</dbReference>
<dbReference type="FunFam" id="3.30.160.20:FF:000001">
    <property type="entry name" value="30S ribosomal protein S5"/>
    <property type="match status" value="1"/>
</dbReference>
<dbReference type="FunFam" id="3.30.230.10:FF:000002">
    <property type="entry name" value="30S ribosomal protein S5"/>
    <property type="match status" value="1"/>
</dbReference>
<dbReference type="Gene3D" id="3.30.160.20">
    <property type="match status" value="1"/>
</dbReference>
<dbReference type="Gene3D" id="3.30.230.10">
    <property type="match status" value="1"/>
</dbReference>
<dbReference type="HAMAP" id="MF_01307_B">
    <property type="entry name" value="Ribosomal_uS5_B"/>
    <property type="match status" value="1"/>
</dbReference>
<dbReference type="InterPro" id="IPR020568">
    <property type="entry name" value="Ribosomal_Su5_D2-typ_SF"/>
</dbReference>
<dbReference type="InterPro" id="IPR000851">
    <property type="entry name" value="Ribosomal_uS5"/>
</dbReference>
<dbReference type="InterPro" id="IPR005712">
    <property type="entry name" value="Ribosomal_uS5_bac-type"/>
</dbReference>
<dbReference type="InterPro" id="IPR005324">
    <property type="entry name" value="Ribosomal_uS5_C"/>
</dbReference>
<dbReference type="InterPro" id="IPR013810">
    <property type="entry name" value="Ribosomal_uS5_N"/>
</dbReference>
<dbReference type="InterPro" id="IPR018192">
    <property type="entry name" value="Ribosomal_uS5_N_CS"/>
</dbReference>
<dbReference type="InterPro" id="IPR014721">
    <property type="entry name" value="Ribsml_uS5_D2-typ_fold_subgr"/>
</dbReference>
<dbReference type="NCBIfam" id="TIGR01021">
    <property type="entry name" value="rpsE_bact"/>
    <property type="match status" value="1"/>
</dbReference>
<dbReference type="PANTHER" id="PTHR48277">
    <property type="entry name" value="MITOCHONDRIAL RIBOSOMAL PROTEIN S5"/>
    <property type="match status" value="1"/>
</dbReference>
<dbReference type="PANTHER" id="PTHR48277:SF1">
    <property type="entry name" value="MITOCHONDRIAL RIBOSOMAL PROTEIN S5"/>
    <property type="match status" value="1"/>
</dbReference>
<dbReference type="Pfam" id="PF00333">
    <property type="entry name" value="Ribosomal_S5"/>
    <property type="match status" value="1"/>
</dbReference>
<dbReference type="Pfam" id="PF03719">
    <property type="entry name" value="Ribosomal_S5_C"/>
    <property type="match status" value="1"/>
</dbReference>
<dbReference type="SUPFAM" id="SSF54768">
    <property type="entry name" value="dsRNA-binding domain-like"/>
    <property type="match status" value="1"/>
</dbReference>
<dbReference type="SUPFAM" id="SSF54211">
    <property type="entry name" value="Ribosomal protein S5 domain 2-like"/>
    <property type="match status" value="1"/>
</dbReference>
<dbReference type="PROSITE" id="PS00585">
    <property type="entry name" value="RIBOSOMAL_S5"/>
    <property type="match status" value="1"/>
</dbReference>
<dbReference type="PROSITE" id="PS50881">
    <property type="entry name" value="S5_DSRBD"/>
    <property type="match status" value="1"/>
</dbReference>
<reference key="1">
    <citation type="submission" date="2007-03" db="EMBL/GenBank/DDBJ databases">
        <title>Complete sequence of chromosome 1 of Burkholderia vietnamiensis G4.</title>
        <authorList>
            <consortium name="US DOE Joint Genome Institute"/>
            <person name="Copeland A."/>
            <person name="Lucas S."/>
            <person name="Lapidus A."/>
            <person name="Barry K."/>
            <person name="Detter J.C."/>
            <person name="Glavina del Rio T."/>
            <person name="Hammon N."/>
            <person name="Israni S."/>
            <person name="Dalin E."/>
            <person name="Tice H."/>
            <person name="Pitluck S."/>
            <person name="Chain P."/>
            <person name="Malfatti S."/>
            <person name="Shin M."/>
            <person name="Vergez L."/>
            <person name="Schmutz J."/>
            <person name="Larimer F."/>
            <person name="Land M."/>
            <person name="Hauser L."/>
            <person name="Kyrpides N."/>
            <person name="Tiedje J."/>
            <person name="Richardson P."/>
        </authorList>
    </citation>
    <scope>NUCLEOTIDE SEQUENCE [LARGE SCALE GENOMIC DNA]</scope>
    <source>
        <strain>G4 / LMG 22486</strain>
    </source>
</reference>
<gene>
    <name evidence="1" type="primary">rpsE</name>
    <name type="ordered locus">Bcep1808_0347</name>
</gene>
<comment type="function">
    <text evidence="1">With S4 and S12 plays an important role in translational accuracy.</text>
</comment>
<comment type="function">
    <text evidence="1">Located at the back of the 30S subunit body where it stabilizes the conformation of the head with respect to the body.</text>
</comment>
<comment type="subunit">
    <text evidence="1">Part of the 30S ribosomal subunit. Contacts proteins S4 and S8.</text>
</comment>
<comment type="domain">
    <text>The N-terminal domain interacts with the head of the 30S subunit; the C-terminal domain interacts with the body and contacts protein S4. The interaction surface between S4 and S5 is involved in control of translational fidelity.</text>
</comment>
<comment type="similarity">
    <text evidence="1">Belongs to the universal ribosomal protein uS5 family.</text>
</comment>